<accession>Q9PLX4</accession>
<accession>Q0P7S7</accession>
<comment type="function">
    <text evidence="1">One of the primary rRNA binding proteins. Required for association of the 30S and 50S subunits to form the 70S ribosome, for tRNA binding and peptide bond formation. It has been suggested to have peptidyltransferase activity; this is somewhat controversial. Makes several contacts with the 16S rRNA in the 70S ribosome.</text>
</comment>
<comment type="subunit">
    <text evidence="1">Part of the 50S ribosomal subunit. Forms a bridge to the 30S subunit in the 70S ribosome.</text>
</comment>
<comment type="similarity">
    <text evidence="1">Belongs to the universal ribosomal protein uL2 family.</text>
</comment>
<protein>
    <recommendedName>
        <fullName evidence="1">Large ribosomal subunit protein uL2</fullName>
    </recommendedName>
    <alternativeName>
        <fullName evidence="3">50S ribosomal protein L2</fullName>
    </alternativeName>
</protein>
<organism>
    <name type="scientific">Campylobacter jejuni subsp. jejuni serotype O:2 (strain ATCC 700819 / NCTC 11168)</name>
    <dbReference type="NCBI Taxonomy" id="192222"/>
    <lineage>
        <taxon>Bacteria</taxon>
        <taxon>Pseudomonadati</taxon>
        <taxon>Campylobacterota</taxon>
        <taxon>Epsilonproteobacteria</taxon>
        <taxon>Campylobacterales</taxon>
        <taxon>Campylobacteraceae</taxon>
        <taxon>Campylobacter</taxon>
    </lineage>
</organism>
<keyword id="KW-1185">Reference proteome</keyword>
<keyword id="KW-0687">Ribonucleoprotein</keyword>
<keyword id="KW-0689">Ribosomal protein</keyword>
<keyword id="KW-0694">RNA-binding</keyword>
<keyword id="KW-0699">rRNA-binding</keyword>
<proteinExistence type="inferred from homology"/>
<feature type="chain" id="PRO_0000129542" description="Large ribosomal subunit protein uL2">
    <location>
        <begin position="1"/>
        <end position="276"/>
    </location>
</feature>
<feature type="region of interest" description="Disordered" evidence="2">
    <location>
        <begin position="210"/>
        <end position="276"/>
    </location>
</feature>
<feature type="compositionally biased region" description="Basic and acidic residues" evidence="2">
    <location>
        <begin position="230"/>
        <end position="240"/>
    </location>
</feature>
<feature type="compositionally biased region" description="Basic residues" evidence="2">
    <location>
        <begin position="255"/>
        <end position="276"/>
    </location>
</feature>
<sequence>MAIKTYKPYTPSRRYITGLSSEDITAKPSVRSLLVKLPAHAGRNSYGRITSRHKEAGAKKLYRIIDFKRRKFGIEGKVEAIEYDPYRNCRIALIAYKDGEKRYILQPRGLSVGDIVAAAESGLDIKPGNAMKLKNIPVGTIVHNVELKPGKGGQMIRSAGAYAQLMGKEEKYVILRLASGEMRQVLAECMASIGEVGNEEWANVTIGKAGRNRHRGIRPQTRGSAMNPVDHPHGGGEGKKNSGRHPVTPWGKPTKGAKTRRKKASDKLIISRRKGK</sequence>
<gene>
    <name evidence="1" type="primary">rplB</name>
    <name type="ordered locus">Cj1704c</name>
</gene>
<name>RL2_CAMJE</name>
<evidence type="ECO:0000255" key="1">
    <source>
        <dbReference type="HAMAP-Rule" id="MF_01320"/>
    </source>
</evidence>
<evidence type="ECO:0000256" key="2">
    <source>
        <dbReference type="SAM" id="MobiDB-lite"/>
    </source>
</evidence>
<evidence type="ECO:0000305" key="3"/>
<dbReference type="EMBL" id="AL111168">
    <property type="protein sequence ID" value="CAL35798.1"/>
    <property type="molecule type" value="Genomic_DNA"/>
</dbReference>
<dbReference type="PIR" id="D81268">
    <property type="entry name" value="D81268"/>
</dbReference>
<dbReference type="RefSeq" id="WP_002825501.1">
    <property type="nucleotide sequence ID" value="NZ_SZUC01000002.1"/>
</dbReference>
<dbReference type="RefSeq" id="YP_002345070.1">
    <property type="nucleotide sequence ID" value="NC_002163.1"/>
</dbReference>
<dbReference type="SMR" id="Q9PLX4"/>
<dbReference type="IntAct" id="Q9PLX4">
    <property type="interactions" value="1"/>
</dbReference>
<dbReference type="STRING" id="192222.Cj1704c"/>
<dbReference type="PaxDb" id="192222-Cj1704c"/>
<dbReference type="EnsemblBacteria" id="CAL35798">
    <property type="protein sequence ID" value="CAL35798"/>
    <property type="gene ID" value="Cj1704c"/>
</dbReference>
<dbReference type="GeneID" id="905978"/>
<dbReference type="KEGG" id="cje:Cj1704c"/>
<dbReference type="PATRIC" id="fig|192222.6.peg.1678"/>
<dbReference type="eggNOG" id="COG0090">
    <property type="taxonomic scope" value="Bacteria"/>
</dbReference>
<dbReference type="HOGENOM" id="CLU_036235_2_1_7"/>
<dbReference type="OrthoDB" id="9778722at2"/>
<dbReference type="Proteomes" id="UP000000799">
    <property type="component" value="Chromosome"/>
</dbReference>
<dbReference type="GO" id="GO:0015934">
    <property type="term" value="C:large ribosomal subunit"/>
    <property type="evidence" value="ECO:0007669"/>
    <property type="project" value="InterPro"/>
</dbReference>
<dbReference type="GO" id="GO:0019843">
    <property type="term" value="F:rRNA binding"/>
    <property type="evidence" value="ECO:0007669"/>
    <property type="project" value="UniProtKB-UniRule"/>
</dbReference>
<dbReference type="GO" id="GO:0003735">
    <property type="term" value="F:structural constituent of ribosome"/>
    <property type="evidence" value="ECO:0007669"/>
    <property type="project" value="InterPro"/>
</dbReference>
<dbReference type="GO" id="GO:0016740">
    <property type="term" value="F:transferase activity"/>
    <property type="evidence" value="ECO:0007669"/>
    <property type="project" value="InterPro"/>
</dbReference>
<dbReference type="GO" id="GO:0002181">
    <property type="term" value="P:cytoplasmic translation"/>
    <property type="evidence" value="ECO:0007669"/>
    <property type="project" value="TreeGrafter"/>
</dbReference>
<dbReference type="FunFam" id="2.30.30.30:FF:000001">
    <property type="entry name" value="50S ribosomal protein L2"/>
    <property type="match status" value="1"/>
</dbReference>
<dbReference type="FunFam" id="2.40.50.140:FF:000003">
    <property type="entry name" value="50S ribosomal protein L2"/>
    <property type="match status" value="1"/>
</dbReference>
<dbReference type="FunFam" id="4.10.950.10:FF:000001">
    <property type="entry name" value="50S ribosomal protein L2"/>
    <property type="match status" value="1"/>
</dbReference>
<dbReference type="Gene3D" id="2.30.30.30">
    <property type="match status" value="1"/>
</dbReference>
<dbReference type="Gene3D" id="2.40.50.140">
    <property type="entry name" value="Nucleic acid-binding proteins"/>
    <property type="match status" value="1"/>
</dbReference>
<dbReference type="Gene3D" id="4.10.950.10">
    <property type="entry name" value="Ribosomal protein L2, domain 3"/>
    <property type="match status" value="1"/>
</dbReference>
<dbReference type="HAMAP" id="MF_01320_B">
    <property type="entry name" value="Ribosomal_uL2_B"/>
    <property type="match status" value="1"/>
</dbReference>
<dbReference type="InterPro" id="IPR012340">
    <property type="entry name" value="NA-bd_OB-fold"/>
</dbReference>
<dbReference type="InterPro" id="IPR014722">
    <property type="entry name" value="Rib_uL2_dom2"/>
</dbReference>
<dbReference type="InterPro" id="IPR002171">
    <property type="entry name" value="Ribosomal_uL2"/>
</dbReference>
<dbReference type="InterPro" id="IPR005880">
    <property type="entry name" value="Ribosomal_uL2_bac/org-type"/>
</dbReference>
<dbReference type="InterPro" id="IPR022669">
    <property type="entry name" value="Ribosomal_uL2_C"/>
</dbReference>
<dbReference type="InterPro" id="IPR022671">
    <property type="entry name" value="Ribosomal_uL2_CS"/>
</dbReference>
<dbReference type="InterPro" id="IPR014726">
    <property type="entry name" value="Ribosomal_uL2_dom3"/>
</dbReference>
<dbReference type="InterPro" id="IPR022666">
    <property type="entry name" value="Ribosomal_uL2_RNA-bd_dom"/>
</dbReference>
<dbReference type="InterPro" id="IPR008991">
    <property type="entry name" value="Translation_prot_SH3-like_sf"/>
</dbReference>
<dbReference type="NCBIfam" id="TIGR01171">
    <property type="entry name" value="rplB_bact"/>
    <property type="match status" value="1"/>
</dbReference>
<dbReference type="PANTHER" id="PTHR13691:SF5">
    <property type="entry name" value="LARGE RIBOSOMAL SUBUNIT PROTEIN UL2M"/>
    <property type="match status" value="1"/>
</dbReference>
<dbReference type="PANTHER" id="PTHR13691">
    <property type="entry name" value="RIBOSOMAL PROTEIN L2"/>
    <property type="match status" value="1"/>
</dbReference>
<dbReference type="Pfam" id="PF00181">
    <property type="entry name" value="Ribosomal_L2"/>
    <property type="match status" value="1"/>
</dbReference>
<dbReference type="Pfam" id="PF03947">
    <property type="entry name" value="Ribosomal_L2_C"/>
    <property type="match status" value="1"/>
</dbReference>
<dbReference type="PIRSF" id="PIRSF002158">
    <property type="entry name" value="Ribosomal_L2"/>
    <property type="match status" value="1"/>
</dbReference>
<dbReference type="SMART" id="SM01383">
    <property type="entry name" value="Ribosomal_L2"/>
    <property type="match status" value="1"/>
</dbReference>
<dbReference type="SMART" id="SM01382">
    <property type="entry name" value="Ribosomal_L2_C"/>
    <property type="match status" value="1"/>
</dbReference>
<dbReference type="SUPFAM" id="SSF50249">
    <property type="entry name" value="Nucleic acid-binding proteins"/>
    <property type="match status" value="1"/>
</dbReference>
<dbReference type="SUPFAM" id="SSF50104">
    <property type="entry name" value="Translation proteins SH3-like domain"/>
    <property type="match status" value="1"/>
</dbReference>
<dbReference type="PROSITE" id="PS00467">
    <property type="entry name" value="RIBOSOMAL_L2"/>
    <property type="match status" value="1"/>
</dbReference>
<reference key="1">
    <citation type="journal article" date="2000" name="Nature">
        <title>The genome sequence of the food-borne pathogen Campylobacter jejuni reveals hypervariable sequences.</title>
        <authorList>
            <person name="Parkhill J."/>
            <person name="Wren B.W."/>
            <person name="Mungall K.L."/>
            <person name="Ketley J.M."/>
            <person name="Churcher C.M."/>
            <person name="Basham D."/>
            <person name="Chillingworth T."/>
            <person name="Davies R.M."/>
            <person name="Feltwell T."/>
            <person name="Holroyd S."/>
            <person name="Jagels K."/>
            <person name="Karlyshev A.V."/>
            <person name="Moule S."/>
            <person name="Pallen M.J."/>
            <person name="Penn C.W."/>
            <person name="Quail M.A."/>
            <person name="Rajandream M.A."/>
            <person name="Rutherford K.M."/>
            <person name="van Vliet A.H.M."/>
            <person name="Whitehead S."/>
            <person name="Barrell B.G."/>
        </authorList>
    </citation>
    <scope>NUCLEOTIDE SEQUENCE [LARGE SCALE GENOMIC DNA]</scope>
    <source>
        <strain>ATCC 700819 / NCTC 11168</strain>
    </source>
</reference>